<keyword id="KW-0961">Cell wall biogenesis/degradation</keyword>
<keyword id="KW-0328">Glycosyltransferase</keyword>
<keyword id="KW-1185">Reference proteome</keyword>
<keyword id="KW-0777">Teichoic acid biosynthesis</keyword>
<keyword id="KW-0808">Transferase</keyword>
<name>TARA_STAA8</name>
<organism>
    <name type="scientific">Staphylococcus aureus (strain NCTC 8325 / PS 47)</name>
    <dbReference type="NCBI Taxonomy" id="93061"/>
    <lineage>
        <taxon>Bacteria</taxon>
        <taxon>Bacillati</taxon>
        <taxon>Bacillota</taxon>
        <taxon>Bacilli</taxon>
        <taxon>Bacillales</taxon>
        <taxon>Staphylococcaceae</taxon>
        <taxon>Staphylococcus</taxon>
    </lineage>
</organism>
<proteinExistence type="evidence at protein level"/>
<protein>
    <recommendedName>
        <fullName evidence="1">N-acetylglucosaminyldiphosphoundecaprenol N-acetyl-beta-D-mannosaminyltransferase</fullName>
        <ecNumber evidence="1 2">2.4.1.187</ecNumber>
    </recommendedName>
    <alternativeName>
        <fullName evidence="1">N-acetylmannosaminyltransferase</fullName>
    </alternativeName>
    <alternativeName>
        <fullName evidence="1">UDP-N-acetylmannosamine transferase</fullName>
    </alternativeName>
    <alternativeName>
        <fullName evidence="1">UDP-N-acetylmannosamine:N-acetylglucosaminyl pyrophosphorylundecaprenol N-acetylmannosaminyltransferase</fullName>
    </alternativeName>
</protein>
<feature type="chain" id="PRO_0000437525" description="N-acetylglucosaminyldiphosphoundecaprenol N-acetyl-beta-D-mannosaminyltransferase">
    <location>
        <begin position="1"/>
        <end position="254"/>
    </location>
</feature>
<sequence length="254" mass="29133">MTVEERSNTAKVDILGVDFDNTTMLQMVENIKTFFANQSTNNLFIVTANPEIVNYATTHQAYLELINQASYIVADGTGVVKASHRLKQPLAHRIPGIELMDECLKIAHVNHQKVFLLGATNEVVEAAQYALQQRYPNISFAHHHGYIDLEDETVVKRIKLFKPDYIFVGMGFPKQEEWIMTHENQFESTVMMGVGGSLEVFAGAKKRAPYIFRKLNIEWIYRALIDWKRIGRLKSIPIFMYKIAKAKRKIKKAK</sequence>
<accession>Q2G2L3</accession>
<gene>
    <name evidence="4" type="primary">tarA</name>
    <name evidence="6" type="ordered locus">SAOUHSC_00640</name>
</gene>
<evidence type="ECO:0000255" key="1">
    <source>
        <dbReference type="HAMAP-Rule" id="MF_02070"/>
    </source>
</evidence>
<evidence type="ECO:0000269" key="2">
    <source>
    </source>
</evidence>
<evidence type="ECO:0000269" key="3">
    <source>
    </source>
</evidence>
<evidence type="ECO:0000303" key="4">
    <source>
    </source>
</evidence>
<evidence type="ECO:0000305" key="5">
    <source>
    </source>
</evidence>
<evidence type="ECO:0000312" key="6">
    <source>
        <dbReference type="EMBL" id="ABD29775.1"/>
    </source>
</evidence>
<dbReference type="EC" id="2.4.1.187" evidence="1 2"/>
<dbReference type="EMBL" id="CP000253">
    <property type="protein sequence ID" value="ABD29775.1"/>
    <property type="molecule type" value="Genomic_DNA"/>
</dbReference>
<dbReference type="RefSeq" id="WP_000215388.1">
    <property type="nucleotide sequence ID" value="NZ_LS483365.1"/>
</dbReference>
<dbReference type="RefSeq" id="YP_499200.1">
    <property type="nucleotide sequence ID" value="NC_007795.1"/>
</dbReference>
<dbReference type="SMR" id="Q2G2L3"/>
<dbReference type="STRING" id="93061.SAOUHSC_00640"/>
<dbReference type="CAZy" id="GT26">
    <property type="family name" value="Glycosyltransferase Family 26"/>
</dbReference>
<dbReference type="PaxDb" id="1280-SAXN108_0702"/>
<dbReference type="GeneID" id="3920048"/>
<dbReference type="KEGG" id="sao:SAOUHSC_00640"/>
<dbReference type="PATRIC" id="fig|93061.5.peg.574"/>
<dbReference type="eggNOG" id="COG1922">
    <property type="taxonomic scope" value="Bacteria"/>
</dbReference>
<dbReference type="HOGENOM" id="CLU_063203_3_1_9"/>
<dbReference type="OrthoDB" id="9771846at2"/>
<dbReference type="BioCyc" id="MetaCyc:MONOMER-19984"/>
<dbReference type="UniPathway" id="UPA00790"/>
<dbReference type="PRO" id="PR:Q2G2L3"/>
<dbReference type="Proteomes" id="UP000008816">
    <property type="component" value="Chromosome"/>
</dbReference>
<dbReference type="GO" id="GO:0016758">
    <property type="term" value="F:hexosyltransferase activity"/>
    <property type="evidence" value="ECO:0000318"/>
    <property type="project" value="GO_Central"/>
</dbReference>
<dbReference type="GO" id="GO:0047244">
    <property type="term" value="F:N-acetylglucosaminyldiphosphoundecaprenol N-acetyl-beta-D-mannosaminyltransferase activity"/>
    <property type="evidence" value="ECO:0007669"/>
    <property type="project" value="UniProtKB-UniRule"/>
</dbReference>
<dbReference type="GO" id="GO:0071555">
    <property type="term" value="P:cell wall organization"/>
    <property type="evidence" value="ECO:0007669"/>
    <property type="project" value="UniProtKB-KW"/>
</dbReference>
<dbReference type="GO" id="GO:0019350">
    <property type="term" value="P:teichoic acid biosynthetic process"/>
    <property type="evidence" value="ECO:0007669"/>
    <property type="project" value="UniProtKB-UniRule"/>
</dbReference>
<dbReference type="CDD" id="cd06533">
    <property type="entry name" value="Glyco_transf_WecG_TagA"/>
    <property type="match status" value="1"/>
</dbReference>
<dbReference type="HAMAP" id="MF_02070">
    <property type="entry name" value="TagA_TarA"/>
    <property type="match status" value="1"/>
</dbReference>
<dbReference type="InterPro" id="IPR053391">
    <property type="entry name" value="TAB_Glycosyltransferase"/>
</dbReference>
<dbReference type="InterPro" id="IPR034714">
    <property type="entry name" value="TagA_TarA"/>
</dbReference>
<dbReference type="InterPro" id="IPR004629">
    <property type="entry name" value="WecG_TagA_CpsF"/>
</dbReference>
<dbReference type="NCBIfam" id="NF041710">
    <property type="entry name" value="UDPacetylman_taseTarA"/>
    <property type="match status" value="1"/>
</dbReference>
<dbReference type="NCBIfam" id="TIGR00696">
    <property type="entry name" value="wecG_tagA_cpsF"/>
    <property type="match status" value="1"/>
</dbReference>
<dbReference type="PANTHER" id="PTHR34136">
    <property type="match status" value="1"/>
</dbReference>
<dbReference type="PANTHER" id="PTHR34136:SF1">
    <property type="entry name" value="UDP-N-ACETYL-D-MANNOSAMINURONIC ACID TRANSFERASE"/>
    <property type="match status" value="1"/>
</dbReference>
<dbReference type="Pfam" id="PF03808">
    <property type="entry name" value="Glyco_tran_WecG"/>
    <property type="match status" value="1"/>
</dbReference>
<comment type="function">
    <text evidence="1 2">Catalyzes the conversion of GlcNAc-PP-undecaprenol into ManNAc-GlcNAc-PP-undecaprenol, the first committed lipid intermediate in the de novo synthesis of teichoic acid.</text>
</comment>
<comment type="catalytic activity">
    <reaction evidence="1 2">
        <text>UDP-N-acetyl-alpha-D-mannosamine + N-acetyl-alpha-D-glucosaminyl-di-trans,octa-cis-undecaprenyl diphosphate = N-acetyl-beta-D-mannosaminyl-(1-&gt;4)-N-acetyl-alpha-D-glucosaminyl di-trans,octa-cis-undecaprenyl diphosphate + UDP + H(+)</text>
        <dbReference type="Rhea" id="RHEA:16053"/>
        <dbReference type="ChEBI" id="CHEBI:15378"/>
        <dbReference type="ChEBI" id="CHEBI:58223"/>
        <dbReference type="ChEBI" id="CHEBI:62959"/>
        <dbReference type="ChEBI" id="CHEBI:68623"/>
        <dbReference type="ChEBI" id="CHEBI:132210"/>
        <dbReference type="EC" id="2.4.1.187"/>
    </reaction>
</comment>
<comment type="pathway">
    <text evidence="2 5">Cell wall biogenesis; poly(ribitol phosphate) teichoic acid biosynthesis.</text>
</comment>
<comment type="disruption phenotype">
    <text evidence="3">Not essential. No teichoic acid in cell walls.</text>
</comment>
<comment type="similarity">
    <text evidence="1">Belongs to the glycosyltransferase 26 family. TagA/TarA subfamily.</text>
</comment>
<reference key="1">
    <citation type="book" date="2006" name="Gram positive pathogens, 2nd edition">
        <title>The Staphylococcus aureus NCTC 8325 genome.</title>
        <editorList>
            <person name="Fischetti V."/>
            <person name="Novick R."/>
            <person name="Ferretti J."/>
            <person name="Portnoy D."/>
            <person name="Rood J."/>
        </editorList>
        <authorList>
            <person name="Gillaspy A.F."/>
            <person name="Worrell V."/>
            <person name="Orvis J."/>
            <person name="Roe B.A."/>
            <person name="Dyer D.W."/>
            <person name="Iandolo J.J."/>
        </authorList>
    </citation>
    <scope>NUCLEOTIDE SEQUENCE [LARGE SCALE GENOMIC DNA]</scope>
    <source>
        <strain>NCTC 8325 / PS 47</strain>
    </source>
</reference>
<reference key="2">
    <citation type="journal article" date="2008" name="Chem. Biol.">
        <title>A revised pathway proposed for Staphylococcus aureus wall teichoic acid biosynthesis based on in vitro reconstitution of the intracellular steps.</title>
        <authorList>
            <person name="Brown S."/>
            <person name="Zhang Y.H."/>
            <person name="Walker S."/>
        </authorList>
    </citation>
    <scope>FUNCTION</scope>
    <scope>CATALYTIC ACTIVITY</scope>
    <scope>PATHWAY</scope>
    <source>
        <strain>NCTC 8325 / PS 47</strain>
    </source>
</reference>
<reference key="3">
    <citation type="journal article" date="2009" name="J. Bacteriol.">
        <title>The N-acetylmannosamine transferase catalyzes the first committed step of teichoic acid assembly in Bacillus subtilis and Staphylococcus aureus.</title>
        <authorList>
            <person name="D'Elia M.A."/>
            <person name="Henderson J.A."/>
            <person name="Beveridge T.J."/>
            <person name="Heinrichs D.E."/>
            <person name="Brown E.D."/>
        </authorList>
    </citation>
    <scope>DISRUPTION PHENOTYPE</scope>
    <scope>PATHWAY</scope>
    <source>
        <strain>RN4220 / SA178RI</strain>
    </source>
</reference>